<organism>
    <name type="scientific">Aeromonas salmonicida (strain A449)</name>
    <dbReference type="NCBI Taxonomy" id="382245"/>
    <lineage>
        <taxon>Bacteria</taxon>
        <taxon>Pseudomonadati</taxon>
        <taxon>Pseudomonadota</taxon>
        <taxon>Gammaproteobacteria</taxon>
        <taxon>Aeromonadales</taxon>
        <taxon>Aeromonadaceae</taxon>
        <taxon>Aeromonas</taxon>
    </lineage>
</organism>
<keyword id="KW-0963">Cytoplasm</keyword>
<keyword id="KW-0238">DNA-binding</keyword>
<keyword id="KW-0804">Transcription</keyword>
<keyword id="KW-0805">Transcription regulation</keyword>
<dbReference type="EMBL" id="CP000644">
    <property type="protein sequence ID" value="ABO90856.1"/>
    <property type="molecule type" value="Genomic_DNA"/>
</dbReference>
<dbReference type="RefSeq" id="WP_005313105.1">
    <property type="nucleotide sequence ID" value="NC_009348.1"/>
</dbReference>
<dbReference type="SMR" id="A4SPN4"/>
<dbReference type="STRING" id="29491.GCA_000820065_02215"/>
<dbReference type="KEGG" id="asa:ASA_2843"/>
<dbReference type="eggNOG" id="COG0217">
    <property type="taxonomic scope" value="Bacteria"/>
</dbReference>
<dbReference type="HOGENOM" id="CLU_062974_2_2_6"/>
<dbReference type="Proteomes" id="UP000000225">
    <property type="component" value="Chromosome"/>
</dbReference>
<dbReference type="GO" id="GO:0005829">
    <property type="term" value="C:cytosol"/>
    <property type="evidence" value="ECO:0007669"/>
    <property type="project" value="TreeGrafter"/>
</dbReference>
<dbReference type="GO" id="GO:0003677">
    <property type="term" value="F:DNA binding"/>
    <property type="evidence" value="ECO:0007669"/>
    <property type="project" value="UniProtKB-UniRule"/>
</dbReference>
<dbReference type="GO" id="GO:0006355">
    <property type="term" value="P:regulation of DNA-templated transcription"/>
    <property type="evidence" value="ECO:0007669"/>
    <property type="project" value="UniProtKB-UniRule"/>
</dbReference>
<dbReference type="FunFam" id="1.10.10.200:FF:000001">
    <property type="entry name" value="Probable transcriptional regulatory protein YebC"/>
    <property type="match status" value="1"/>
</dbReference>
<dbReference type="FunFam" id="3.30.70.980:FF:000002">
    <property type="entry name" value="Probable transcriptional regulatory protein YebC"/>
    <property type="match status" value="1"/>
</dbReference>
<dbReference type="Gene3D" id="1.10.10.200">
    <property type="match status" value="1"/>
</dbReference>
<dbReference type="Gene3D" id="3.30.70.980">
    <property type="match status" value="2"/>
</dbReference>
<dbReference type="HAMAP" id="MF_00693">
    <property type="entry name" value="Transcrip_reg_TACO1"/>
    <property type="match status" value="1"/>
</dbReference>
<dbReference type="InterPro" id="IPR017856">
    <property type="entry name" value="Integrase-like_N"/>
</dbReference>
<dbReference type="InterPro" id="IPR048300">
    <property type="entry name" value="TACO1_YebC-like_2nd/3rd_dom"/>
</dbReference>
<dbReference type="InterPro" id="IPR049083">
    <property type="entry name" value="TACO1_YebC_N"/>
</dbReference>
<dbReference type="InterPro" id="IPR002876">
    <property type="entry name" value="Transcrip_reg_TACO1-like"/>
</dbReference>
<dbReference type="InterPro" id="IPR026564">
    <property type="entry name" value="Transcrip_reg_TACO1-like_dom3"/>
</dbReference>
<dbReference type="InterPro" id="IPR029072">
    <property type="entry name" value="YebC-like"/>
</dbReference>
<dbReference type="NCBIfam" id="NF001030">
    <property type="entry name" value="PRK00110.1"/>
    <property type="match status" value="1"/>
</dbReference>
<dbReference type="NCBIfam" id="NF009044">
    <property type="entry name" value="PRK12378.1"/>
    <property type="match status" value="1"/>
</dbReference>
<dbReference type="NCBIfam" id="TIGR01033">
    <property type="entry name" value="YebC/PmpR family DNA-binding transcriptional regulator"/>
    <property type="match status" value="1"/>
</dbReference>
<dbReference type="PANTHER" id="PTHR12532:SF6">
    <property type="entry name" value="TRANSCRIPTIONAL REGULATORY PROTEIN YEBC-RELATED"/>
    <property type="match status" value="1"/>
</dbReference>
<dbReference type="PANTHER" id="PTHR12532">
    <property type="entry name" value="TRANSLATIONAL ACTIVATOR OF CYTOCHROME C OXIDASE 1"/>
    <property type="match status" value="1"/>
</dbReference>
<dbReference type="Pfam" id="PF20772">
    <property type="entry name" value="TACO1_YebC_N"/>
    <property type="match status" value="1"/>
</dbReference>
<dbReference type="Pfam" id="PF01709">
    <property type="entry name" value="Transcrip_reg"/>
    <property type="match status" value="1"/>
</dbReference>
<dbReference type="SUPFAM" id="SSF75625">
    <property type="entry name" value="YebC-like"/>
    <property type="match status" value="1"/>
</dbReference>
<name>Y2843_AERS4</name>
<proteinExistence type="inferred from homology"/>
<accession>A4SPN4</accession>
<gene>
    <name type="ordered locus">ASA_2843</name>
</gene>
<reference key="1">
    <citation type="journal article" date="2008" name="BMC Genomics">
        <title>The genome of Aeromonas salmonicida subsp. salmonicida A449: insights into the evolution of a fish pathogen.</title>
        <authorList>
            <person name="Reith M.E."/>
            <person name="Singh R.K."/>
            <person name="Curtis B."/>
            <person name="Boyd J.M."/>
            <person name="Bouevitch A."/>
            <person name="Kimball J."/>
            <person name="Munholland J."/>
            <person name="Murphy C."/>
            <person name="Sarty D."/>
            <person name="Williams J."/>
            <person name="Nash J.H."/>
            <person name="Johnson S.C."/>
            <person name="Brown L.L."/>
        </authorList>
    </citation>
    <scope>NUCLEOTIDE SEQUENCE [LARGE SCALE GENOMIC DNA]</scope>
    <source>
        <strain>A449</strain>
    </source>
</reference>
<feature type="chain" id="PRO_1000045269" description="Probable transcriptional regulatory protein ASA_2843">
    <location>
        <begin position="1"/>
        <end position="246"/>
    </location>
</feature>
<evidence type="ECO:0000255" key="1">
    <source>
        <dbReference type="HAMAP-Rule" id="MF_00693"/>
    </source>
</evidence>
<comment type="subcellular location">
    <subcellularLocation>
        <location evidence="1">Cytoplasm</location>
    </subcellularLocation>
</comment>
<comment type="similarity">
    <text evidence="1">Belongs to the TACO1 family.</text>
</comment>
<sequence length="246" mass="26177">MAGHSKWANIKHRKAAQDAKRGKIFTKLIREITTSARIGDPDPANNPRLRAAVTAALTSNMTRETINRAIARGAGGGDGEQLETIVYEGYGPAGSAVMVECLTDNRNRTVAEVRHAFSKSGGNLGTDGSVAYLFSKKGLLTFVGVDEDALMDAALEAGADDVVTEEDGSIEVYTTPNDFGTVLDALEAAGFKAQNAEVTMIPSTEAELDAETAPKLMRLIDMLEDLDDVQEVYHNGSISDEVAATL</sequence>
<protein>
    <recommendedName>
        <fullName evidence="1">Probable transcriptional regulatory protein ASA_2843</fullName>
    </recommendedName>
</protein>